<dbReference type="EC" id="2.8.4.3" evidence="1"/>
<dbReference type="EMBL" id="AE016826">
    <property type="protein sequence ID" value="AAO27104.1"/>
    <property type="molecule type" value="Genomic_DNA"/>
</dbReference>
<dbReference type="RefSeq" id="WP_011091505.1">
    <property type="nucleotide sequence ID" value="NC_004545.1"/>
</dbReference>
<dbReference type="SMR" id="Q89AC2"/>
<dbReference type="STRING" id="224915.bbp_392"/>
<dbReference type="KEGG" id="bab:bbp_392"/>
<dbReference type="eggNOG" id="COG0621">
    <property type="taxonomic scope" value="Bacteria"/>
</dbReference>
<dbReference type="HOGENOM" id="CLU_018697_2_0_6"/>
<dbReference type="OrthoDB" id="9805215at2"/>
<dbReference type="Proteomes" id="UP000000601">
    <property type="component" value="Chromosome"/>
</dbReference>
<dbReference type="GO" id="GO:0005829">
    <property type="term" value="C:cytosol"/>
    <property type="evidence" value="ECO:0007669"/>
    <property type="project" value="TreeGrafter"/>
</dbReference>
<dbReference type="GO" id="GO:0051539">
    <property type="term" value="F:4 iron, 4 sulfur cluster binding"/>
    <property type="evidence" value="ECO:0007669"/>
    <property type="project" value="UniProtKB-UniRule"/>
</dbReference>
<dbReference type="GO" id="GO:0046872">
    <property type="term" value="F:metal ion binding"/>
    <property type="evidence" value="ECO:0007669"/>
    <property type="project" value="UniProtKB-KW"/>
</dbReference>
<dbReference type="GO" id="GO:0035597">
    <property type="term" value="F:N6-isopentenyladenosine methylthiotransferase activity"/>
    <property type="evidence" value="ECO:0007669"/>
    <property type="project" value="TreeGrafter"/>
</dbReference>
<dbReference type="CDD" id="cd01335">
    <property type="entry name" value="Radical_SAM"/>
    <property type="match status" value="1"/>
</dbReference>
<dbReference type="FunFam" id="3.40.50.12160:FF:000001">
    <property type="entry name" value="tRNA-2-methylthio-N(6)-dimethylallyladenosine synthase"/>
    <property type="match status" value="1"/>
</dbReference>
<dbReference type="FunFam" id="3.80.30.20:FF:000001">
    <property type="entry name" value="tRNA-2-methylthio-N(6)-dimethylallyladenosine synthase 2"/>
    <property type="match status" value="1"/>
</dbReference>
<dbReference type="Gene3D" id="3.40.50.12160">
    <property type="entry name" value="Methylthiotransferase, N-terminal domain"/>
    <property type="match status" value="1"/>
</dbReference>
<dbReference type="Gene3D" id="3.80.30.20">
    <property type="entry name" value="tm_1862 like domain"/>
    <property type="match status" value="1"/>
</dbReference>
<dbReference type="HAMAP" id="MF_01864">
    <property type="entry name" value="tRNA_metthiotr_MiaB"/>
    <property type="match status" value="1"/>
</dbReference>
<dbReference type="InterPro" id="IPR006638">
    <property type="entry name" value="Elp3/MiaA/NifB-like_rSAM"/>
</dbReference>
<dbReference type="InterPro" id="IPR005839">
    <property type="entry name" value="Methylthiotransferase"/>
</dbReference>
<dbReference type="InterPro" id="IPR020612">
    <property type="entry name" value="Methylthiotransferase_CS"/>
</dbReference>
<dbReference type="InterPro" id="IPR013848">
    <property type="entry name" value="Methylthiotransferase_N"/>
</dbReference>
<dbReference type="InterPro" id="IPR038135">
    <property type="entry name" value="Methylthiotransferase_N_sf"/>
</dbReference>
<dbReference type="InterPro" id="IPR006463">
    <property type="entry name" value="MiaB_methiolase"/>
</dbReference>
<dbReference type="InterPro" id="IPR007197">
    <property type="entry name" value="rSAM"/>
</dbReference>
<dbReference type="InterPro" id="IPR023404">
    <property type="entry name" value="rSAM_horseshoe"/>
</dbReference>
<dbReference type="InterPro" id="IPR002792">
    <property type="entry name" value="TRAM_dom"/>
</dbReference>
<dbReference type="NCBIfam" id="TIGR01574">
    <property type="entry name" value="miaB-methiolase"/>
    <property type="match status" value="1"/>
</dbReference>
<dbReference type="NCBIfam" id="TIGR00089">
    <property type="entry name" value="MiaB/RimO family radical SAM methylthiotransferase"/>
    <property type="match status" value="1"/>
</dbReference>
<dbReference type="PANTHER" id="PTHR43020">
    <property type="entry name" value="CDK5 REGULATORY SUBUNIT-ASSOCIATED PROTEIN 1"/>
    <property type="match status" value="1"/>
</dbReference>
<dbReference type="PANTHER" id="PTHR43020:SF2">
    <property type="entry name" value="MITOCHONDRIAL TRNA METHYLTHIOTRANSFERASE CDK5RAP1"/>
    <property type="match status" value="1"/>
</dbReference>
<dbReference type="Pfam" id="PF04055">
    <property type="entry name" value="Radical_SAM"/>
    <property type="match status" value="1"/>
</dbReference>
<dbReference type="Pfam" id="PF01938">
    <property type="entry name" value="TRAM"/>
    <property type="match status" value="1"/>
</dbReference>
<dbReference type="Pfam" id="PF00919">
    <property type="entry name" value="UPF0004"/>
    <property type="match status" value="1"/>
</dbReference>
<dbReference type="SFLD" id="SFLDF00273">
    <property type="entry name" value="(dimethylallyl)adenosine_tRNA"/>
    <property type="match status" value="1"/>
</dbReference>
<dbReference type="SFLD" id="SFLDG01082">
    <property type="entry name" value="B12-binding_domain_containing"/>
    <property type="match status" value="1"/>
</dbReference>
<dbReference type="SFLD" id="SFLDG01061">
    <property type="entry name" value="methylthiotransferase"/>
    <property type="match status" value="1"/>
</dbReference>
<dbReference type="SMART" id="SM00729">
    <property type="entry name" value="Elp3"/>
    <property type="match status" value="1"/>
</dbReference>
<dbReference type="SUPFAM" id="SSF102114">
    <property type="entry name" value="Radical SAM enzymes"/>
    <property type="match status" value="1"/>
</dbReference>
<dbReference type="PROSITE" id="PS51449">
    <property type="entry name" value="MTTASE_N"/>
    <property type="match status" value="1"/>
</dbReference>
<dbReference type="PROSITE" id="PS01278">
    <property type="entry name" value="MTTASE_RADICAL"/>
    <property type="match status" value="1"/>
</dbReference>
<dbReference type="PROSITE" id="PS51918">
    <property type="entry name" value="RADICAL_SAM"/>
    <property type="match status" value="1"/>
</dbReference>
<dbReference type="PROSITE" id="PS50926">
    <property type="entry name" value="TRAM"/>
    <property type="match status" value="1"/>
</dbReference>
<name>MIAB_BUCBP</name>
<feature type="chain" id="PRO_0000141732" description="tRNA-2-methylthio-N(6)-dimethylallyladenosine synthase">
    <location>
        <begin position="1"/>
        <end position="445"/>
    </location>
</feature>
<feature type="domain" description="MTTase N-terminal" evidence="1">
    <location>
        <begin position="4"/>
        <end position="121"/>
    </location>
</feature>
<feature type="domain" description="Radical SAM core" evidence="2">
    <location>
        <begin position="144"/>
        <end position="376"/>
    </location>
</feature>
<feature type="domain" description="TRAM" evidence="1">
    <location>
        <begin position="379"/>
        <end position="442"/>
    </location>
</feature>
<feature type="binding site" evidence="1">
    <location>
        <position position="13"/>
    </location>
    <ligand>
        <name>[4Fe-4S] cluster</name>
        <dbReference type="ChEBI" id="CHEBI:49883"/>
        <label>1</label>
    </ligand>
</feature>
<feature type="binding site" evidence="1">
    <location>
        <position position="50"/>
    </location>
    <ligand>
        <name>[4Fe-4S] cluster</name>
        <dbReference type="ChEBI" id="CHEBI:49883"/>
        <label>1</label>
    </ligand>
</feature>
<feature type="binding site" evidence="1">
    <location>
        <position position="84"/>
    </location>
    <ligand>
        <name>[4Fe-4S] cluster</name>
        <dbReference type="ChEBI" id="CHEBI:49883"/>
        <label>1</label>
    </ligand>
</feature>
<feature type="binding site" evidence="1">
    <location>
        <position position="158"/>
    </location>
    <ligand>
        <name>[4Fe-4S] cluster</name>
        <dbReference type="ChEBI" id="CHEBI:49883"/>
        <label>2</label>
        <note>4Fe-4S-S-AdoMet</note>
    </ligand>
</feature>
<feature type="binding site" evidence="1">
    <location>
        <position position="162"/>
    </location>
    <ligand>
        <name>[4Fe-4S] cluster</name>
        <dbReference type="ChEBI" id="CHEBI:49883"/>
        <label>2</label>
        <note>4Fe-4S-S-AdoMet</note>
    </ligand>
</feature>
<feature type="binding site" evidence="1">
    <location>
        <position position="165"/>
    </location>
    <ligand>
        <name>[4Fe-4S] cluster</name>
        <dbReference type="ChEBI" id="CHEBI:49883"/>
        <label>2</label>
        <note>4Fe-4S-S-AdoMet</note>
    </ligand>
</feature>
<gene>
    <name evidence="1" type="primary">miaB</name>
    <name type="ordered locus">bbp_392</name>
</gene>
<reference key="1">
    <citation type="journal article" date="2003" name="Proc. Natl. Acad. Sci. U.S.A.">
        <title>Reductive genome evolution in Buchnera aphidicola.</title>
        <authorList>
            <person name="van Ham R.C.H.J."/>
            <person name="Kamerbeek J."/>
            <person name="Palacios C."/>
            <person name="Rausell C."/>
            <person name="Abascal F."/>
            <person name="Bastolla U."/>
            <person name="Fernandez J.M."/>
            <person name="Jimenez L."/>
            <person name="Postigo M."/>
            <person name="Silva F.J."/>
            <person name="Tamames J."/>
            <person name="Viguera E."/>
            <person name="Latorre A."/>
            <person name="Valencia A."/>
            <person name="Moran F."/>
            <person name="Moya A."/>
        </authorList>
    </citation>
    <scope>NUCLEOTIDE SEQUENCE [LARGE SCALE GENOMIC DNA]</scope>
    <source>
        <strain>Bp</strain>
    </source>
</reference>
<evidence type="ECO:0000255" key="1">
    <source>
        <dbReference type="HAMAP-Rule" id="MF_01864"/>
    </source>
</evidence>
<evidence type="ECO:0000255" key="2">
    <source>
        <dbReference type="PROSITE-ProRule" id="PRU01266"/>
    </source>
</evidence>
<keyword id="KW-0004">4Fe-4S</keyword>
<keyword id="KW-0963">Cytoplasm</keyword>
<keyword id="KW-0408">Iron</keyword>
<keyword id="KW-0411">Iron-sulfur</keyword>
<keyword id="KW-0479">Metal-binding</keyword>
<keyword id="KW-1185">Reference proteome</keyword>
<keyword id="KW-0949">S-adenosyl-L-methionine</keyword>
<keyword id="KW-0808">Transferase</keyword>
<keyword id="KW-0819">tRNA processing</keyword>
<accession>Q89AC2</accession>
<protein>
    <recommendedName>
        <fullName evidence="1">tRNA-2-methylthio-N(6)-dimethylallyladenosine synthase</fullName>
        <ecNumber evidence="1">2.8.4.3</ecNumber>
    </recommendedName>
    <alternativeName>
        <fullName evidence="1">(Dimethylallyl)adenosine tRNA methylthiotransferase MiaB</fullName>
    </alternativeName>
    <alternativeName>
        <fullName evidence="1">tRNA-i(6)A37 methylthiotransferase</fullName>
    </alternativeName>
</protein>
<sequence>MKNNKIYIKTWGCQMNEYDSALITQILKQKHGYENTKDPKLANVLILNTCSIREKAQEKVFHQLGRWKKLKQKNPNLIIAVGGCVATQEGKNIYKRANYVDIIFGTQTLHYLPNMIQEVKKNKKSVTNIDFPLTEKFNFIEYPRKPKVTAFVSIMEGCNKFCSFCIVPYTRGHEISRPVDDILLEISTLSSRGVKEIHLLGQNVNSYKGKTFNGDICKFSNLLRLVASIDGIDRIRFTTSNPFEFTDDIIEIYAEIPKIVSFLHLPVQSGSNRILQLMKRMHTIDEYKTIINKILKLRPNIQISSDFIIGFPGETLIDFEQTLQLIKDLNIDMSYSFIYSPRPGTPASELQDNVTLCEKQKRLHILQTLIRNNTTMWNQKMLGSIQSVLVEGRSQKNPKELFGRTENNRIVNFKGNQNMIGEFINLKITKINPNSLRGSYEKRNN</sequence>
<organism>
    <name type="scientific">Buchnera aphidicola subsp. Baizongia pistaciae (strain Bp)</name>
    <dbReference type="NCBI Taxonomy" id="224915"/>
    <lineage>
        <taxon>Bacteria</taxon>
        <taxon>Pseudomonadati</taxon>
        <taxon>Pseudomonadota</taxon>
        <taxon>Gammaproteobacteria</taxon>
        <taxon>Enterobacterales</taxon>
        <taxon>Erwiniaceae</taxon>
        <taxon>Buchnera</taxon>
    </lineage>
</organism>
<comment type="function">
    <text evidence="1">Catalyzes the methylthiolation of N6-(dimethylallyl)adenosine (i(6)A), leading to the formation of 2-methylthio-N6-(dimethylallyl)adenosine (ms(2)i(6)A) at position 37 in tRNAs that read codons beginning with uridine.</text>
</comment>
<comment type="catalytic activity">
    <reaction evidence="1">
        <text>N(6)-dimethylallyladenosine(37) in tRNA + (sulfur carrier)-SH + AH2 + 2 S-adenosyl-L-methionine = 2-methylsulfanyl-N(6)-dimethylallyladenosine(37) in tRNA + (sulfur carrier)-H + 5'-deoxyadenosine + L-methionine + A + S-adenosyl-L-homocysteine + 2 H(+)</text>
        <dbReference type="Rhea" id="RHEA:37067"/>
        <dbReference type="Rhea" id="RHEA-COMP:10375"/>
        <dbReference type="Rhea" id="RHEA-COMP:10376"/>
        <dbReference type="Rhea" id="RHEA-COMP:14737"/>
        <dbReference type="Rhea" id="RHEA-COMP:14739"/>
        <dbReference type="ChEBI" id="CHEBI:13193"/>
        <dbReference type="ChEBI" id="CHEBI:15378"/>
        <dbReference type="ChEBI" id="CHEBI:17319"/>
        <dbReference type="ChEBI" id="CHEBI:17499"/>
        <dbReference type="ChEBI" id="CHEBI:29917"/>
        <dbReference type="ChEBI" id="CHEBI:57844"/>
        <dbReference type="ChEBI" id="CHEBI:57856"/>
        <dbReference type="ChEBI" id="CHEBI:59789"/>
        <dbReference type="ChEBI" id="CHEBI:64428"/>
        <dbReference type="ChEBI" id="CHEBI:74415"/>
        <dbReference type="ChEBI" id="CHEBI:74417"/>
        <dbReference type="EC" id="2.8.4.3"/>
    </reaction>
</comment>
<comment type="cofactor">
    <cofactor evidence="1">
        <name>[4Fe-4S] cluster</name>
        <dbReference type="ChEBI" id="CHEBI:49883"/>
    </cofactor>
    <text evidence="1">Binds 2 [4Fe-4S] clusters. One cluster is coordinated with 3 cysteines and an exchangeable S-adenosyl-L-methionine.</text>
</comment>
<comment type="subunit">
    <text evidence="1">Monomer.</text>
</comment>
<comment type="subcellular location">
    <subcellularLocation>
        <location evidence="1">Cytoplasm</location>
    </subcellularLocation>
</comment>
<comment type="similarity">
    <text evidence="1">Belongs to the methylthiotransferase family. MiaB subfamily.</text>
</comment>
<proteinExistence type="inferred from homology"/>